<proteinExistence type="inferred from homology"/>
<organism>
    <name type="scientific">Salmonella typhimurium (strain LT2 / SGSC1412 / ATCC 700720)</name>
    <dbReference type="NCBI Taxonomy" id="99287"/>
    <lineage>
        <taxon>Bacteria</taxon>
        <taxon>Pseudomonadati</taxon>
        <taxon>Pseudomonadota</taxon>
        <taxon>Gammaproteobacteria</taxon>
        <taxon>Enterobacterales</taxon>
        <taxon>Enterobacteriaceae</taxon>
        <taxon>Salmonella</taxon>
    </lineage>
</organism>
<keyword id="KW-0413">Isomerase</keyword>
<keyword id="KW-0479">Metal-binding</keyword>
<keyword id="KW-1185">Reference proteome</keyword>
<keyword id="KW-0862">Zinc</keyword>
<dbReference type="EC" id="5.3.1.17" evidence="1"/>
<dbReference type="EMBL" id="AE006468">
    <property type="protein sequence ID" value="AAL21894.1"/>
    <property type="molecule type" value="Genomic_DNA"/>
</dbReference>
<dbReference type="RefSeq" id="NP_461935.1">
    <property type="nucleotide sequence ID" value="NC_003197.2"/>
</dbReference>
<dbReference type="RefSeq" id="WP_000383271.1">
    <property type="nucleotide sequence ID" value="NC_003197.2"/>
</dbReference>
<dbReference type="SMR" id="Q8ZM98"/>
<dbReference type="STRING" id="99287.STM3018"/>
<dbReference type="PaxDb" id="99287-STM3018"/>
<dbReference type="GeneID" id="1254541"/>
<dbReference type="KEGG" id="stm:STM3018"/>
<dbReference type="PATRIC" id="fig|99287.12.peg.3194"/>
<dbReference type="HOGENOM" id="CLU_062609_0_0_6"/>
<dbReference type="PhylomeDB" id="Q8ZM98"/>
<dbReference type="BioCyc" id="SENT99287:STM3018-MONOMER"/>
<dbReference type="UniPathway" id="UPA00545">
    <property type="reaction ID" value="UER00826"/>
</dbReference>
<dbReference type="Proteomes" id="UP000001014">
    <property type="component" value="Chromosome"/>
</dbReference>
<dbReference type="GO" id="GO:0008697">
    <property type="term" value="F:4-deoxy-L-threo-5-hexosulose-uronate ketol-isomerase activity"/>
    <property type="evidence" value="ECO:0000318"/>
    <property type="project" value="GO_Central"/>
</dbReference>
<dbReference type="GO" id="GO:0046872">
    <property type="term" value="F:metal ion binding"/>
    <property type="evidence" value="ECO:0000318"/>
    <property type="project" value="GO_Central"/>
</dbReference>
<dbReference type="GO" id="GO:0008270">
    <property type="term" value="F:zinc ion binding"/>
    <property type="evidence" value="ECO:0007669"/>
    <property type="project" value="UniProtKB-UniRule"/>
</dbReference>
<dbReference type="GO" id="GO:0019698">
    <property type="term" value="P:D-galacturonate catabolic process"/>
    <property type="evidence" value="ECO:0000318"/>
    <property type="project" value="GO_Central"/>
</dbReference>
<dbReference type="GO" id="GO:0042840">
    <property type="term" value="P:D-glucuronate catabolic process"/>
    <property type="evidence" value="ECO:0000318"/>
    <property type="project" value="GO_Central"/>
</dbReference>
<dbReference type="GO" id="GO:0045490">
    <property type="term" value="P:pectin catabolic process"/>
    <property type="evidence" value="ECO:0007669"/>
    <property type="project" value="UniProtKB-UniRule"/>
</dbReference>
<dbReference type="CDD" id="cd20491">
    <property type="entry name" value="cupin_KduI_C"/>
    <property type="match status" value="1"/>
</dbReference>
<dbReference type="CDD" id="cd20294">
    <property type="entry name" value="cupin_KduI_N"/>
    <property type="match status" value="1"/>
</dbReference>
<dbReference type="FunFam" id="2.60.120.10:FF:000018">
    <property type="entry name" value="4-deoxy-L-threo-5-hexosulose-uronate ketol-isomerase"/>
    <property type="match status" value="1"/>
</dbReference>
<dbReference type="FunFam" id="2.60.120.520:FF:000001">
    <property type="entry name" value="4-deoxy-L-threo-5-hexosulose-uronate ketol-isomerase"/>
    <property type="match status" value="1"/>
</dbReference>
<dbReference type="Gene3D" id="2.60.120.10">
    <property type="entry name" value="Jelly Rolls"/>
    <property type="match status" value="1"/>
</dbReference>
<dbReference type="Gene3D" id="2.60.120.520">
    <property type="entry name" value="pectin degrading enzyme 5-keto 4- deoxyuronate isomerase, domain 1"/>
    <property type="match status" value="1"/>
</dbReference>
<dbReference type="HAMAP" id="MF_00687">
    <property type="entry name" value="KduI"/>
    <property type="match status" value="1"/>
</dbReference>
<dbReference type="InterPro" id="IPR007045">
    <property type="entry name" value="KduI"/>
</dbReference>
<dbReference type="InterPro" id="IPR021120">
    <property type="entry name" value="KduI/IolB_isomerase"/>
</dbReference>
<dbReference type="InterPro" id="IPR027449">
    <property type="entry name" value="KduI_N"/>
</dbReference>
<dbReference type="InterPro" id="IPR014710">
    <property type="entry name" value="RmlC-like_jellyroll"/>
</dbReference>
<dbReference type="InterPro" id="IPR011051">
    <property type="entry name" value="RmlC_Cupin_sf"/>
</dbReference>
<dbReference type="NCBIfam" id="NF002091">
    <property type="entry name" value="PRK00924.1"/>
    <property type="match status" value="1"/>
</dbReference>
<dbReference type="PANTHER" id="PTHR38461">
    <property type="entry name" value="4-DEOXY-L-THREO-5-HEXOSULOSE-URONATE KETOL-ISOMERASE"/>
    <property type="match status" value="1"/>
</dbReference>
<dbReference type="PANTHER" id="PTHR38461:SF1">
    <property type="entry name" value="4-DEOXY-L-THREO-5-HEXOSULOSE-URONATE KETOL-ISOMERASE"/>
    <property type="match status" value="1"/>
</dbReference>
<dbReference type="Pfam" id="PF04962">
    <property type="entry name" value="KduI"/>
    <property type="match status" value="1"/>
</dbReference>
<dbReference type="PIRSF" id="PIRSF006625">
    <property type="entry name" value="KduI"/>
    <property type="match status" value="1"/>
</dbReference>
<dbReference type="SUPFAM" id="SSF51182">
    <property type="entry name" value="RmlC-like cupins"/>
    <property type="match status" value="1"/>
</dbReference>
<name>KDUI_SALTY</name>
<protein>
    <recommendedName>
        <fullName evidence="1">4-deoxy-L-threo-5-hexosulose-uronate ketol-isomerase</fullName>
        <ecNumber evidence="1">5.3.1.17</ecNumber>
    </recommendedName>
    <alternativeName>
        <fullName evidence="1">5-keto-4-deoxyuronate isomerase</fullName>
    </alternativeName>
    <alternativeName>
        <fullName evidence="1">DKI isomerase</fullName>
    </alternativeName>
</protein>
<accession>Q8ZM98</accession>
<gene>
    <name evidence="1" type="primary">kduI</name>
    <name type="ordered locus">STM3018</name>
</gene>
<feature type="chain" id="PRO_0000215496" description="4-deoxy-L-threo-5-hexosulose-uronate ketol-isomerase">
    <location>
        <begin position="1"/>
        <end position="278"/>
    </location>
</feature>
<feature type="binding site" evidence="1">
    <location>
        <position position="196"/>
    </location>
    <ligand>
        <name>Zn(2+)</name>
        <dbReference type="ChEBI" id="CHEBI:29105"/>
    </ligand>
</feature>
<feature type="binding site" evidence="1">
    <location>
        <position position="198"/>
    </location>
    <ligand>
        <name>Zn(2+)</name>
        <dbReference type="ChEBI" id="CHEBI:29105"/>
    </ligand>
</feature>
<feature type="binding site" evidence="1">
    <location>
        <position position="203"/>
    </location>
    <ligand>
        <name>Zn(2+)</name>
        <dbReference type="ChEBI" id="CHEBI:29105"/>
    </ligand>
</feature>
<feature type="binding site" evidence="1">
    <location>
        <position position="245"/>
    </location>
    <ligand>
        <name>Zn(2+)</name>
        <dbReference type="ChEBI" id="CHEBI:29105"/>
    </ligand>
</feature>
<evidence type="ECO:0000255" key="1">
    <source>
        <dbReference type="HAMAP-Rule" id="MF_00687"/>
    </source>
</evidence>
<comment type="function">
    <text evidence="1">Catalyzes the isomerization of 5-dehydro-4-deoxy-D-glucuronate to 3-deoxy-D-glycero-2,5-hexodiulosonate.</text>
</comment>
<comment type="catalytic activity">
    <reaction evidence="1">
        <text>5-dehydro-4-deoxy-D-glucuronate = 3-deoxy-D-glycero-2,5-hexodiulosonate</text>
        <dbReference type="Rhea" id="RHEA:23896"/>
        <dbReference type="ChEBI" id="CHEBI:17117"/>
        <dbReference type="ChEBI" id="CHEBI:29071"/>
        <dbReference type="EC" id="5.3.1.17"/>
    </reaction>
</comment>
<comment type="cofactor">
    <cofactor evidence="1">
        <name>Zn(2+)</name>
        <dbReference type="ChEBI" id="CHEBI:29105"/>
    </cofactor>
    <text evidence="1">Binds 1 zinc ion per subunit.</text>
</comment>
<comment type="pathway">
    <text evidence="1">Glycan metabolism; pectin degradation; 2-dehydro-3-deoxy-D-gluconate from pectin: step 4/5.</text>
</comment>
<comment type="similarity">
    <text evidence="1">Belongs to the KduI family.</text>
</comment>
<reference key="1">
    <citation type="journal article" date="2001" name="Nature">
        <title>Complete genome sequence of Salmonella enterica serovar Typhimurium LT2.</title>
        <authorList>
            <person name="McClelland M."/>
            <person name="Sanderson K.E."/>
            <person name="Spieth J."/>
            <person name="Clifton S.W."/>
            <person name="Latreille P."/>
            <person name="Courtney L."/>
            <person name="Porwollik S."/>
            <person name="Ali J."/>
            <person name="Dante M."/>
            <person name="Du F."/>
            <person name="Hou S."/>
            <person name="Layman D."/>
            <person name="Leonard S."/>
            <person name="Nguyen C."/>
            <person name="Scott K."/>
            <person name="Holmes A."/>
            <person name="Grewal N."/>
            <person name="Mulvaney E."/>
            <person name="Ryan E."/>
            <person name="Sun H."/>
            <person name="Florea L."/>
            <person name="Miller W."/>
            <person name="Stoneking T."/>
            <person name="Nhan M."/>
            <person name="Waterston R."/>
            <person name="Wilson R.K."/>
        </authorList>
    </citation>
    <scope>NUCLEOTIDE SEQUENCE [LARGE SCALE GENOMIC DNA]</scope>
    <source>
        <strain>LT2 / SGSC1412 / ATCC 700720</strain>
    </source>
</reference>
<sequence>MDVRQSIHSEHAKTLDTQALRREFLIENIFVADEYTMVYSHIDRIIVGGIMPVSHPVEIGGEVGKQLGVSRLLDRRELGVINIGGAGAIIVDGQRHDIGHRDALYIGKGAKELVFVSNEASRPAKFYYNCAPAHTAYPTKKVSPADVAPVTLGDNLTSNRRTINKYFVPDVLETCQLSMGLTELAPGNLWNTMPCHTHERRMEVYLYFNMEEDSCVFHMMGQPQETRHIVMRNEQAVISPSWSIHSGVGTKAYTFVWGMVGENQVFDDMDHVAVQDLR</sequence>